<dbReference type="EMBL" id="X62540">
    <property type="protein sequence ID" value="CAA44421.1"/>
    <property type="molecule type" value="Genomic_DNA"/>
</dbReference>
<dbReference type="PIR" id="S18097">
    <property type="entry name" value="S18097"/>
</dbReference>
<dbReference type="RefSeq" id="WP_003253182.1">
    <property type="nucleotide sequence ID" value="NZ_SPUU01000003.1"/>
</dbReference>
<dbReference type="SMR" id="P0A150"/>
<dbReference type="GeneID" id="83683235"/>
<dbReference type="eggNOG" id="COG1192">
    <property type="taxonomic scope" value="Bacteria"/>
</dbReference>
<dbReference type="OMA" id="PIQCEYF"/>
<dbReference type="CDD" id="cd02042">
    <property type="entry name" value="ParAB_family"/>
    <property type="match status" value="1"/>
</dbReference>
<dbReference type="FunFam" id="3.40.50.300:FF:000285">
    <property type="entry name" value="Sporulation initiation inhibitor Soj"/>
    <property type="match status" value="1"/>
</dbReference>
<dbReference type="Gene3D" id="3.40.50.300">
    <property type="entry name" value="P-loop containing nucleotide triphosphate hydrolases"/>
    <property type="match status" value="1"/>
</dbReference>
<dbReference type="InterPro" id="IPR025669">
    <property type="entry name" value="AAA_dom"/>
</dbReference>
<dbReference type="InterPro" id="IPR050678">
    <property type="entry name" value="DNA_Partitioning_ATPase"/>
</dbReference>
<dbReference type="InterPro" id="IPR027417">
    <property type="entry name" value="P-loop_NTPase"/>
</dbReference>
<dbReference type="PANTHER" id="PTHR13696">
    <property type="entry name" value="P-LOOP CONTAINING NUCLEOSIDE TRIPHOSPHATE HYDROLASE"/>
    <property type="match status" value="1"/>
</dbReference>
<dbReference type="PANTHER" id="PTHR13696:SF52">
    <property type="entry name" value="PARA FAMILY PROTEIN CT_582"/>
    <property type="match status" value="1"/>
</dbReference>
<dbReference type="Pfam" id="PF13614">
    <property type="entry name" value="AAA_31"/>
    <property type="match status" value="1"/>
</dbReference>
<dbReference type="SUPFAM" id="SSF52540">
    <property type="entry name" value="P-loop containing nucleoside triphosphate hydrolases"/>
    <property type="match status" value="1"/>
</dbReference>
<organism>
    <name type="scientific">Pseudomonas putida</name>
    <name type="common">Arthrobacter siderocapsulatus</name>
    <dbReference type="NCBI Taxonomy" id="303"/>
    <lineage>
        <taxon>Bacteria</taxon>
        <taxon>Pseudomonadati</taxon>
        <taxon>Pseudomonadota</taxon>
        <taxon>Gammaproteobacteria</taxon>
        <taxon>Pseudomonadales</taxon>
        <taxon>Pseudomonadaceae</taxon>
        <taxon>Pseudomonas</taxon>
    </lineage>
</organism>
<reference key="1">
    <citation type="journal article" date="1992" name="Mol. Microbiol.">
        <title>Genes and their organization in the replication origin region of the bacterial chromosome.</title>
        <authorList>
            <person name="Ogasawara N."/>
            <person name="Yoshikawa H."/>
        </authorList>
    </citation>
    <scope>NUCLEOTIDE SEQUENCE [GENOMIC DNA]</scope>
    <source>
        <strain>TN2100</strain>
    </source>
</reference>
<accession>P0A150</accession>
<accession>P31856</accession>
<feature type="chain" id="PRO_0000066231" description="Uncharacterized protein in gidB 3'region">
    <location>
        <begin position="1"/>
        <end position="263"/>
    </location>
</feature>
<comment type="similarity">
    <text evidence="1">To B.subtilis soj.</text>
</comment>
<evidence type="ECO:0000305" key="1"/>
<protein>
    <recommendedName>
        <fullName>Uncharacterized protein in gidB 3'region</fullName>
    </recommendedName>
</protein>
<sequence length="263" mass="28919">MAKVFAIANQKGGVGKTTTCINLAASLAATKRRVLLIDLDPQGNATMGSGVDKHELEHSVYDLLIGECDLAQAMHYSEHGGFQLLPANRDLTAAEVVLLEMQVKESRLRNALAPIRDNYDYILIDCPPSLSMLTLNALVASDGVIIPMQCEYYALEGLSDLVDNIKRIAARLNPELKIEGLLRTMYDPRLSLNNDVSAQLKEHFGPQLYDTVIPRNIRLAEAPSFGMPALAYDKQSRGALAYLALAGELVRRQRRPSRTAQTT</sequence>
<name>YGIDB_PSEPU</name>
<proteinExistence type="predicted"/>